<evidence type="ECO:0000256" key="1">
    <source>
        <dbReference type="SAM" id="MobiDB-lite"/>
    </source>
</evidence>
<evidence type="ECO:0000269" key="2">
    <source>
    </source>
</evidence>
<evidence type="ECO:0000269" key="3">
    <source>
    </source>
</evidence>
<evidence type="ECO:0000269" key="4">
    <source>
    </source>
</evidence>
<evidence type="ECO:0000305" key="5"/>
<evidence type="ECO:0007829" key="6">
    <source>
        <dbReference type="PDB" id="2B3T"/>
    </source>
</evidence>
<name>RF1_ECOLI</name>
<organism>
    <name type="scientific">Escherichia coli (strain K12)</name>
    <dbReference type="NCBI Taxonomy" id="83333"/>
    <lineage>
        <taxon>Bacteria</taxon>
        <taxon>Pseudomonadati</taxon>
        <taxon>Pseudomonadota</taxon>
        <taxon>Gammaproteobacteria</taxon>
        <taxon>Enterobacterales</taxon>
        <taxon>Enterobacteriaceae</taxon>
        <taxon>Escherichia</taxon>
    </lineage>
</organism>
<feature type="chain" id="PRO_0000177668" description="Peptide chain release factor RF1">
    <location>
        <begin position="1"/>
        <end position="360"/>
    </location>
</feature>
<feature type="region of interest" description="Disordered" evidence="1">
    <location>
        <begin position="284"/>
        <end position="313"/>
    </location>
</feature>
<feature type="modified residue" description="N5-methylglutamine" evidence="2 4">
    <location>
        <position position="235"/>
    </location>
</feature>
<feature type="mutagenesis site" description="Loss of methylation." evidence="4">
    <original>Q</original>
    <variation>E</variation>
    <variation>A</variation>
    <location>
        <position position="235"/>
    </location>
</feature>
<feature type="sequence conflict" description="In Ref. 7; M30785." evidence="5" ref="7">
    <original>PEMREMAQDELREAKEKSEQ</original>
    <variation>LRYLLYLRLFVVLFRHVVGD</variation>
    <location>
        <begin position="72"/>
        <end position="91"/>
    </location>
</feature>
<feature type="sequence conflict" description="In Ref. 3; AAC43437." evidence="5" ref="3">
    <original>D</original>
    <variation>E</variation>
    <location>
        <position position="211"/>
    </location>
</feature>
<feature type="sequence conflict" description="In Ref. 1; AAA24519." evidence="5" ref="1">
    <original>D</original>
    <variation>G</variation>
    <location>
        <position position="241"/>
    </location>
</feature>
<feature type="helix" evidence="6">
    <location>
        <begin position="10"/>
        <end position="26"/>
    </location>
</feature>
<feature type="helix" evidence="6">
    <location>
        <begin position="35"/>
        <end position="55"/>
    </location>
</feature>
<feature type="helix" evidence="6">
    <location>
        <begin position="106"/>
        <end position="108"/>
    </location>
</feature>
<feature type="strand" evidence="6">
    <location>
        <begin position="111"/>
        <end position="117"/>
    </location>
</feature>
<feature type="strand" evidence="6">
    <location>
        <begin position="119"/>
        <end position="121"/>
    </location>
</feature>
<feature type="helix" evidence="6">
    <location>
        <begin position="122"/>
        <end position="141"/>
    </location>
</feature>
<feature type="strand" evidence="6">
    <location>
        <begin position="148"/>
        <end position="153"/>
    </location>
</feature>
<feature type="strand" evidence="6">
    <location>
        <begin position="157"/>
        <end position="166"/>
    </location>
</feature>
<feature type="strand" evidence="6">
    <location>
        <begin position="168"/>
        <end position="170"/>
    </location>
</feature>
<feature type="helix" evidence="6">
    <location>
        <begin position="172"/>
        <end position="175"/>
    </location>
</feature>
<feature type="helix" evidence="6">
    <location>
        <begin position="176"/>
        <end position="178"/>
    </location>
</feature>
<feature type="strand" evidence="6">
    <location>
        <begin position="180"/>
        <end position="186"/>
    </location>
</feature>
<feature type="strand" evidence="6">
    <location>
        <begin position="197"/>
        <end position="204"/>
    </location>
</feature>
<feature type="turn" evidence="6">
    <location>
        <begin position="211"/>
        <end position="213"/>
    </location>
</feature>
<feature type="strand" evidence="6">
    <location>
        <begin position="219"/>
        <end position="226"/>
    </location>
</feature>
<feature type="turn" evidence="6">
    <location>
        <begin position="234"/>
        <end position="236"/>
    </location>
</feature>
<feature type="strand" evidence="6">
    <location>
        <begin position="240"/>
        <end position="248"/>
    </location>
</feature>
<feature type="turn" evidence="6">
    <location>
        <begin position="249"/>
        <end position="251"/>
    </location>
</feature>
<feature type="strand" evidence="6">
    <location>
        <begin position="254"/>
        <end position="261"/>
    </location>
</feature>
<feature type="helix" evidence="6">
    <location>
        <begin position="263"/>
        <end position="278"/>
    </location>
</feature>
<feature type="turn" evidence="6">
    <location>
        <begin position="279"/>
        <end position="284"/>
    </location>
</feature>
<feature type="strand" evidence="6">
    <location>
        <begin position="306"/>
        <end position="311"/>
    </location>
</feature>
<feature type="turn" evidence="6">
    <location>
        <begin position="312"/>
        <end position="315"/>
    </location>
</feature>
<feature type="strand" evidence="6">
    <location>
        <begin position="316"/>
        <end position="319"/>
    </location>
</feature>
<feature type="helix" evidence="6">
    <location>
        <begin position="320"/>
        <end position="322"/>
    </location>
</feature>
<feature type="strand" evidence="6">
    <location>
        <begin position="324"/>
        <end position="327"/>
    </location>
</feature>
<feature type="helix" evidence="6">
    <location>
        <begin position="329"/>
        <end position="334"/>
    </location>
</feature>
<feature type="helix" evidence="6">
    <location>
        <begin position="338"/>
        <end position="352"/>
    </location>
</feature>
<comment type="function">
    <text>Peptide chain release factor 1 directs the termination of translation in response to the peptide chain termination codons UAG and UAA.</text>
</comment>
<comment type="subcellular location">
    <subcellularLocation>
        <location>Cytoplasm</location>
    </subcellularLocation>
</comment>
<comment type="PTM">
    <text evidence="2 3 4">Methylated by PrmC. Methylation increases the termination efficiency of RF1.</text>
</comment>
<comment type="similarity">
    <text evidence="5">Belongs to the prokaryotic/mitochondrial release factor family.</text>
</comment>
<dbReference type="EMBL" id="M11519">
    <property type="protein sequence ID" value="AAA24519.1"/>
    <property type="molecule type" value="Genomic_DNA"/>
</dbReference>
<dbReference type="EMBL" id="U18555">
    <property type="protein sequence ID" value="AAC43437.1"/>
    <property type="molecule type" value="Genomic_DNA"/>
</dbReference>
<dbReference type="EMBL" id="U00096">
    <property type="protein sequence ID" value="AAC74295.1"/>
    <property type="molecule type" value="Genomic_DNA"/>
</dbReference>
<dbReference type="EMBL" id="AP009048">
    <property type="protein sequence ID" value="BAA36069.1"/>
    <property type="molecule type" value="Genomic_DNA"/>
</dbReference>
<dbReference type="EMBL" id="M30785">
    <property type="status" value="NOT_ANNOTATED_CDS"/>
    <property type="molecule type" value="Genomic_DNA"/>
</dbReference>
<dbReference type="EMBL" id="M25323">
    <property type="protein sequence ID" value="AAA23955.1"/>
    <property type="molecule type" value="Genomic_DNA"/>
</dbReference>
<dbReference type="EMBL" id="D28567">
    <property type="protein sequence ID" value="BAA05914.1"/>
    <property type="molecule type" value="Genomic_DNA"/>
</dbReference>
<dbReference type="PIR" id="H64867">
    <property type="entry name" value="FCECR1"/>
</dbReference>
<dbReference type="RefSeq" id="NP_415729.1">
    <property type="nucleotide sequence ID" value="NC_000913.3"/>
</dbReference>
<dbReference type="RefSeq" id="WP_000804726.1">
    <property type="nucleotide sequence ID" value="NZ_STEB01000023.1"/>
</dbReference>
<dbReference type="PDB" id="2B3T">
    <property type="method" value="X-ray"/>
    <property type="resolution" value="3.10 A"/>
    <property type="chains" value="B=1-360"/>
</dbReference>
<dbReference type="PDB" id="5J30">
    <property type="method" value="X-ray"/>
    <property type="resolution" value="3.20 A"/>
    <property type="chains" value="QY/XY=1-360"/>
</dbReference>
<dbReference type="PDB" id="5J3C">
    <property type="method" value="X-ray"/>
    <property type="resolution" value="3.04 A"/>
    <property type="chains" value="QY/XY=1-360"/>
</dbReference>
<dbReference type="PDB" id="5J4D">
    <property type="method" value="X-ray"/>
    <property type="resolution" value="3.10 A"/>
    <property type="chains" value="JA/OC=1-360"/>
</dbReference>
<dbReference type="PDB" id="5O2R">
    <property type="method" value="EM"/>
    <property type="resolution" value="3.40 A"/>
    <property type="chains" value="v=110-351"/>
</dbReference>
<dbReference type="PDB" id="6B4V">
    <property type="method" value="X-ray"/>
    <property type="resolution" value="3.40 A"/>
    <property type="chains" value="JA/NC=1-360"/>
</dbReference>
<dbReference type="PDB" id="6BOH">
    <property type="method" value="X-ray"/>
    <property type="resolution" value="3.40 A"/>
    <property type="chains" value="JA/KA/OC/PC=1-360"/>
</dbReference>
<dbReference type="PDB" id="6BOK">
    <property type="method" value="X-ray"/>
    <property type="resolution" value="3.55 A"/>
    <property type="chains" value="GD/HD=1-360"/>
</dbReference>
<dbReference type="PDB" id="6DNC">
    <property type="method" value="EM"/>
    <property type="resolution" value="3.70 A"/>
    <property type="chains" value="MA=1-360"/>
</dbReference>
<dbReference type="PDB" id="6GWT">
    <property type="method" value="EM"/>
    <property type="resolution" value="3.80 A"/>
    <property type="chains" value="v=104-351"/>
</dbReference>
<dbReference type="PDB" id="6GXM">
    <property type="method" value="EM"/>
    <property type="resolution" value="3.80 A"/>
    <property type="chains" value="v=104-351"/>
</dbReference>
<dbReference type="PDB" id="6GXN">
    <property type="method" value="EM"/>
    <property type="resolution" value="3.90 A"/>
    <property type="chains" value="v=2-351"/>
</dbReference>
<dbReference type="PDB" id="6GXO">
    <property type="method" value="EM"/>
    <property type="resolution" value="3.90 A"/>
    <property type="chains" value="v=104-351"/>
</dbReference>
<dbReference type="PDB" id="6ORL">
    <property type="method" value="EM"/>
    <property type="resolution" value="3.50 A"/>
    <property type="chains" value="A=100-356"/>
</dbReference>
<dbReference type="PDB" id="6OSK">
    <property type="method" value="EM"/>
    <property type="resolution" value="3.60 A"/>
    <property type="chains" value="A=97-355"/>
</dbReference>
<dbReference type="PDB" id="6OSQ">
    <property type="method" value="EM"/>
    <property type="resolution" value="3.50 A"/>
    <property type="chains" value="A=97-355"/>
</dbReference>
<dbReference type="PDB" id="7M5D">
    <property type="method" value="EM"/>
    <property type="resolution" value="2.80 A"/>
    <property type="chains" value="A=1-360"/>
</dbReference>
<dbReference type="PDB" id="8AKN">
    <property type="method" value="EM"/>
    <property type="resolution" value="2.30 A"/>
    <property type="chains" value="W=1-360"/>
</dbReference>
<dbReference type="PDB" id="8FZD">
    <property type="method" value="EM"/>
    <property type="resolution" value="3.10 A"/>
    <property type="chains" value="w=1-360"/>
</dbReference>
<dbReference type="PDB" id="8FZE">
    <property type="method" value="EM"/>
    <property type="resolution" value="3.00 A"/>
    <property type="chains" value="w=1-360"/>
</dbReference>
<dbReference type="PDB" id="8FZG">
    <property type="method" value="EM"/>
    <property type="resolution" value="3.10 A"/>
    <property type="chains" value="w=1-360"/>
</dbReference>
<dbReference type="PDB" id="8FZH">
    <property type="method" value="EM"/>
    <property type="resolution" value="2.90 A"/>
    <property type="chains" value="w=1-360"/>
</dbReference>
<dbReference type="PDBsum" id="2B3T"/>
<dbReference type="PDBsum" id="5J30"/>
<dbReference type="PDBsum" id="5J3C"/>
<dbReference type="PDBsum" id="5J4D"/>
<dbReference type="PDBsum" id="5O2R"/>
<dbReference type="PDBsum" id="6B4V"/>
<dbReference type="PDBsum" id="6BOH"/>
<dbReference type="PDBsum" id="6BOK"/>
<dbReference type="PDBsum" id="6DNC"/>
<dbReference type="PDBsum" id="6GWT"/>
<dbReference type="PDBsum" id="6GXM"/>
<dbReference type="PDBsum" id="6GXN"/>
<dbReference type="PDBsum" id="6GXO"/>
<dbReference type="PDBsum" id="6ORL"/>
<dbReference type="PDBsum" id="6OSK"/>
<dbReference type="PDBsum" id="6OSQ"/>
<dbReference type="PDBsum" id="7M5D"/>
<dbReference type="PDBsum" id="8AKN"/>
<dbReference type="PDBsum" id="8FZD"/>
<dbReference type="PDBsum" id="8FZE"/>
<dbReference type="PDBsum" id="8FZG"/>
<dbReference type="PDBsum" id="8FZH"/>
<dbReference type="EMDB" id="EMD-0076"/>
<dbReference type="EMDB" id="EMD-0080"/>
<dbReference type="EMDB" id="EMD-0081"/>
<dbReference type="EMDB" id="EMD-0082"/>
<dbReference type="EMDB" id="EMD-15488"/>
<dbReference type="EMDB" id="EMD-3730"/>
<dbReference type="SMR" id="P0A7I0"/>
<dbReference type="BioGRID" id="4260107">
    <property type="interactions" value="64"/>
</dbReference>
<dbReference type="DIP" id="DIP-35936N"/>
<dbReference type="FunCoup" id="P0A7I0">
    <property type="interactions" value="757"/>
</dbReference>
<dbReference type="IntAct" id="P0A7I0">
    <property type="interactions" value="13"/>
</dbReference>
<dbReference type="STRING" id="511145.b1211"/>
<dbReference type="iPTMnet" id="P0A7I0"/>
<dbReference type="jPOST" id="P0A7I0"/>
<dbReference type="PaxDb" id="511145-b1211"/>
<dbReference type="EnsemblBacteria" id="AAC74295">
    <property type="protein sequence ID" value="AAC74295"/>
    <property type="gene ID" value="b1211"/>
</dbReference>
<dbReference type="GeneID" id="93775276"/>
<dbReference type="GeneID" id="949002"/>
<dbReference type="KEGG" id="ecj:JW1202"/>
<dbReference type="KEGG" id="eco:b1211"/>
<dbReference type="KEGG" id="ecoc:C3026_07115"/>
<dbReference type="PATRIC" id="fig|1411691.4.peg.1073"/>
<dbReference type="EchoBASE" id="EB0754"/>
<dbReference type="eggNOG" id="COG0216">
    <property type="taxonomic scope" value="Bacteria"/>
</dbReference>
<dbReference type="HOGENOM" id="CLU_036856_0_1_6"/>
<dbReference type="InParanoid" id="P0A7I0"/>
<dbReference type="OMA" id="DHRVGFK"/>
<dbReference type="OrthoDB" id="9806673at2"/>
<dbReference type="PhylomeDB" id="P0A7I0"/>
<dbReference type="BioCyc" id="EcoCyc:EG10761-MONOMER"/>
<dbReference type="EvolutionaryTrace" id="P0A7I0"/>
<dbReference type="PRO" id="PR:P0A7I0"/>
<dbReference type="Proteomes" id="UP000000625">
    <property type="component" value="Chromosome"/>
</dbReference>
<dbReference type="GO" id="GO:0005829">
    <property type="term" value="C:cytosol"/>
    <property type="evidence" value="ECO:0000314"/>
    <property type="project" value="EcoCyc"/>
</dbReference>
<dbReference type="GO" id="GO:0043022">
    <property type="term" value="F:ribosome binding"/>
    <property type="evidence" value="ECO:0000314"/>
    <property type="project" value="EcoCyc"/>
</dbReference>
<dbReference type="GO" id="GO:0016149">
    <property type="term" value="F:translation release factor activity, codon specific"/>
    <property type="evidence" value="ECO:0000314"/>
    <property type="project" value="EcoCyc"/>
</dbReference>
<dbReference type="GO" id="GO:0006415">
    <property type="term" value="P:translational termination"/>
    <property type="evidence" value="ECO:0000315"/>
    <property type="project" value="EcoCyc"/>
</dbReference>
<dbReference type="FunFam" id="3.30.160.20:FF:000004">
    <property type="entry name" value="Peptide chain release factor 1"/>
    <property type="match status" value="1"/>
</dbReference>
<dbReference type="FunFam" id="3.30.70.1660:FF:000002">
    <property type="entry name" value="Peptide chain release factor 1"/>
    <property type="match status" value="1"/>
</dbReference>
<dbReference type="FunFam" id="3.30.70.1660:FF:000004">
    <property type="entry name" value="Peptide chain release factor 1"/>
    <property type="match status" value="1"/>
</dbReference>
<dbReference type="Gene3D" id="3.30.160.20">
    <property type="match status" value="1"/>
</dbReference>
<dbReference type="Gene3D" id="3.30.70.1660">
    <property type="match status" value="1"/>
</dbReference>
<dbReference type="Gene3D" id="6.10.140.1950">
    <property type="match status" value="1"/>
</dbReference>
<dbReference type="HAMAP" id="MF_00093">
    <property type="entry name" value="Rel_fac_1"/>
    <property type="match status" value="1"/>
</dbReference>
<dbReference type="InterPro" id="IPR005139">
    <property type="entry name" value="PCRF"/>
</dbReference>
<dbReference type="InterPro" id="IPR000352">
    <property type="entry name" value="Pep_chain_release_fac_I"/>
</dbReference>
<dbReference type="InterPro" id="IPR045853">
    <property type="entry name" value="Pep_chain_release_fac_I_sf"/>
</dbReference>
<dbReference type="InterPro" id="IPR050057">
    <property type="entry name" value="Prokaryotic/Mito_RF"/>
</dbReference>
<dbReference type="InterPro" id="IPR004373">
    <property type="entry name" value="RF-1"/>
</dbReference>
<dbReference type="NCBIfam" id="TIGR00019">
    <property type="entry name" value="prfA"/>
    <property type="match status" value="1"/>
</dbReference>
<dbReference type="NCBIfam" id="NF001859">
    <property type="entry name" value="PRK00591.1"/>
    <property type="match status" value="1"/>
</dbReference>
<dbReference type="PANTHER" id="PTHR43804">
    <property type="entry name" value="LD18447P"/>
    <property type="match status" value="1"/>
</dbReference>
<dbReference type="PANTHER" id="PTHR43804:SF7">
    <property type="entry name" value="LD18447P"/>
    <property type="match status" value="1"/>
</dbReference>
<dbReference type="Pfam" id="PF03462">
    <property type="entry name" value="PCRF"/>
    <property type="match status" value="1"/>
</dbReference>
<dbReference type="Pfam" id="PF00472">
    <property type="entry name" value="RF-1"/>
    <property type="match status" value="1"/>
</dbReference>
<dbReference type="SMART" id="SM00937">
    <property type="entry name" value="PCRF"/>
    <property type="match status" value="1"/>
</dbReference>
<dbReference type="SUPFAM" id="SSF75620">
    <property type="entry name" value="Release factor"/>
    <property type="match status" value="1"/>
</dbReference>
<dbReference type="PROSITE" id="PS00745">
    <property type="entry name" value="RF_PROK_I"/>
    <property type="match status" value="1"/>
</dbReference>
<protein>
    <recommendedName>
        <fullName>Peptide chain release factor RF1</fullName>
        <shortName>RF-1</shortName>
    </recommendedName>
</protein>
<gene>
    <name type="primary">prfA</name>
    <name type="synonym">sueB</name>
    <name type="synonym">uar</name>
    <name type="ordered locus">b1211</name>
    <name type="ordered locus">JW1202</name>
</gene>
<keyword id="KW-0002">3D-structure</keyword>
<keyword id="KW-0963">Cytoplasm</keyword>
<keyword id="KW-0488">Methylation</keyword>
<keyword id="KW-0648">Protein biosynthesis</keyword>
<keyword id="KW-1185">Reference proteome</keyword>
<sequence length="360" mass="40517">MKPSIVAKLEALHERHEEVQALLGDAQTIADQERFRALSREYAQLSDVSRCFTDWQQVQEDIETAQMMLDDPEMREMAQDELREAKEKSEQLEQQLQVLLLPKDPDDERNAFLEVRAGTGGDEAALFAGDLFRMYSRYAEARRWRVEIMSASEGEHGGYKEIIAKISGDGVYGRLKFESGGHRVQRVPATESQGRIHTSACTVAVMPELPDAELPDINPADLRIDTFRSSGAGGQHVNTTDSAIRITHLPTGIVVECQDERSQHKNKAKALSVLGARIHAAEMAKRQQAEASTRRNLLGSGDRSDRNRTYNFPQGRVTDHRINLTLYRLDEVMEGKLDMLIEPIIQEHQADQLAALSEQE</sequence>
<reference key="1">
    <citation type="journal article" date="1985" name="Proc. Natl. Acad. Sci. U.S.A.">
        <title>Bacterial peptide chain release factors: conserved primary structure and possible frameshift regulation of release factor 2.</title>
        <authorList>
            <person name="Craigen W.J."/>
            <person name="Cook R.G."/>
            <person name="Tate W.P."/>
            <person name="Caskey C.T."/>
        </authorList>
    </citation>
    <scope>NUCLEOTIDE SEQUENCE [GENOMIC DNA]</scope>
</reference>
<reference key="2">
    <citation type="journal article" date="1988" name="J. Bacteriol.">
        <title>Rapid and precise mapping of the Escherichia coli release factor genes by two physical approaches.</title>
        <authorList>
            <person name="Lee C.C."/>
            <person name="Kohara Y."/>
            <person name="Akiyama K."/>
            <person name="Smith C.L."/>
            <person name="Craigen W.J."/>
            <person name="Caskey C.T."/>
        </authorList>
    </citation>
    <scope>SEQUENCE REVISION</scope>
</reference>
<reference key="3">
    <citation type="journal article" date="1995" name="J. Bacteriol.">
        <title>Expression of genes kdsA and kdsB involved in 3-deoxy-D-manno-octulosonic acid metabolism and biosynthesis of enterobacterial lipopolysaccharide is growth phase regulated primarily at the transcriptional level in Escherichia coli K-12.</title>
        <authorList>
            <person name="Strohmaier H."/>
            <person name="Remler P."/>
            <person name="Renner W."/>
            <person name="Hoegenauer G."/>
        </authorList>
    </citation>
    <scope>NUCLEOTIDE SEQUENCE [GENOMIC DNA]</scope>
    <source>
        <strain>K12</strain>
    </source>
</reference>
<reference key="4">
    <citation type="journal article" date="1996" name="DNA Res.">
        <title>A 718-kb DNA sequence of the Escherichia coli K-12 genome corresponding to the 12.7-28.0 min region on the linkage map.</title>
        <authorList>
            <person name="Oshima T."/>
            <person name="Aiba H."/>
            <person name="Baba T."/>
            <person name="Fujita K."/>
            <person name="Hayashi K."/>
            <person name="Honjo A."/>
            <person name="Ikemoto K."/>
            <person name="Inada T."/>
            <person name="Itoh T."/>
            <person name="Kajihara M."/>
            <person name="Kanai K."/>
            <person name="Kashimoto K."/>
            <person name="Kimura S."/>
            <person name="Kitagawa M."/>
            <person name="Makino K."/>
            <person name="Masuda S."/>
            <person name="Miki T."/>
            <person name="Mizobuchi K."/>
            <person name="Mori H."/>
            <person name="Motomura K."/>
            <person name="Nakamura Y."/>
            <person name="Nashimoto H."/>
            <person name="Nishio Y."/>
            <person name="Saito N."/>
            <person name="Sampei G."/>
            <person name="Seki Y."/>
            <person name="Tagami H."/>
            <person name="Takemoto K."/>
            <person name="Wada C."/>
            <person name="Yamamoto Y."/>
            <person name="Yano M."/>
            <person name="Horiuchi T."/>
        </authorList>
    </citation>
    <scope>NUCLEOTIDE SEQUENCE [LARGE SCALE GENOMIC DNA]</scope>
    <source>
        <strain>K12 / W3110 / ATCC 27325 / DSM 5911</strain>
    </source>
</reference>
<reference key="5">
    <citation type="journal article" date="1997" name="Science">
        <title>The complete genome sequence of Escherichia coli K-12.</title>
        <authorList>
            <person name="Blattner F.R."/>
            <person name="Plunkett G. III"/>
            <person name="Bloch C.A."/>
            <person name="Perna N.T."/>
            <person name="Burland V."/>
            <person name="Riley M."/>
            <person name="Collado-Vides J."/>
            <person name="Glasner J.D."/>
            <person name="Rode C.K."/>
            <person name="Mayhew G.F."/>
            <person name="Gregor J."/>
            <person name="Davis N.W."/>
            <person name="Kirkpatrick H.A."/>
            <person name="Goeden M.A."/>
            <person name="Rose D.J."/>
            <person name="Mau B."/>
            <person name="Shao Y."/>
        </authorList>
    </citation>
    <scope>NUCLEOTIDE SEQUENCE [LARGE SCALE GENOMIC DNA]</scope>
    <source>
        <strain>K12 / MG1655 / ATCC 47076</strain>
    </source>
</reference>
<reference key="6">
    <citation type="journal article" date="2006" name="Mol. Syst. Biol.">
        <title>Highly accurate genome sequences of Escherichia coli K-12 strains MG1655 and W3110.</title>
        <authorList>
            <person name="Hayashi K."/>
            <person name="Morooka N."/>
            <person name="Yamamoto Y."/>
            <person name="Fujita K."/>
            <person name="Isono K."/>
            <person name="Choi S."/>
            <person name="Ohtsubo E."/>
            <person name="Baba T."/>
            <person name="Wanner B.L."/>
            <person name="Mori H."/>
            <person name="Horiuchi T."/>
        </authorList>
    </citation>
    <scope>NUCLEOTIDE SEQUENCE [LARGE SCALE GENOMIC DNA]</scope>
    <source>
        <strain>K12 / W3110 / ATCC 27325 / DSM 5911</strain>
    </source>
</reference>
<reference key="7">
    <citation type="journal article" date="1989" name="Gene">
        <title>Cloning and structure of the hem A gene of Escherichia coli K-12.</title>
        <authorList>
            <person name="Li J.-M."/>
            <person name="Russell C.S."/>
            <person name="Cosloy S.D."/>
        </authorList>
    </citation>
    <scope>NUCLEOTIDE SEQUENCE [GENOMIC DNA] OF 1-91</scope>
    <source>
        <strain>K12</strain>
    </source>
</reference>
<reference key="8">
    <citation type="journal article" date="1989" name="J. Bacteriol.">
        <title>Isolation, nucleotide sequence, and preliminary characterization of the Escherichia coli K-12 hemA gene.</title>
        <authorList>
            <person name="Verkamp E."/>
            <person name="Chelm B.K."/>
        </authorList>
    </citation>
    <scope>NUCLEOTIDE SEQUENCE [GENOMIC DNA] OF 1-6</scope>
    <source>
        <strain>K12</strain>
    </source>
</reference>
<reference key="9">
    <citation type="journal article" date="1995" name="Gene">
        <title>Cloning and sequencing of a previously unidentified gene that is involved in the biosynthesis of heme in Escherichia coli.</title>
        <authorList>
            <person name="Nakayashiki T."/>
            <person name="Nishimura K."/>
            <person name="Inokuchi H."/>
        </authorList>
    </citation>
    <scope>NUCLEOTIDE SEQUENCE [GENOMIC DNA] OF 339-360</scope>
    <source>
        <strain>K12</strain>
    </source>
</reference>
<reference key="10">
    <citation type="journal article" date="1997" name="Electrophoresis">
        <title>Escherichia coli proteome analysis using the gene-protein database.</title>
        <authorList>
            <person name="VanBogelen R.A."/>
            <person name="Abshire K.Z."/>
            <person name="Moldover B."/>
            <person name="Olson E.R."/>
            <person name="Neidhardt F.C."/>
        </authorList>
    </citation>
    <scope>IDENTIFICATION BY 2D-GEL</scope>
</reference>
<reference key="11">
    <citation type="journal article" date="2000" name="EMBO J.">
        <title>A post-translational modification in the GGQ motif of RF2 from Escherichia coli stimulates termination of translation.</title>
        <authorList>
            <person name="Dincbas-Renqvist V."/>
            <person name="Engstroem A."/>
            <person name="Mora L."/>
            <person name="Heurgue-Hamard V."/>
            <person name="Buckingham R."/>
            <person name="Ehrenberg M."/>
        </authorList>
    </citation>
    <scope>METHYLATION AT GLN-235</scope>
</reference>
<reference key="12">
    <citation type="journal article" date="2002" name="EMBO J.">
        <title>The hemK gene in Escherichia coli encodes the N(5)-glutamine methyltransferase that modifies peptide release factors.</title>
        <authorList>
            <person name="Heurgue-Hamard V."/>
            <person name="Champ S."/>
            <person name="Engstroem A."/>
            <person name="Ehrenberg M."/>
            <person name="Buckingham R.H."/>
        </authorList>
    </citation>
    <scope>METHYLATION AT GLN-235 BY PRMC</scope>
    <scope>MUTAGENESIS OF GLN-235</scope>
    <source>
        <strain>K12</strain>
    </source>
</reference>
<reference key="13">
    <citation type="journal article" date="2002" name="Proc. Natl. Acad. Sci. U.S.A.">
        <title>HemK, a class of protein methyl transferase with similarity to DNA methyl transferases, methylates polypeptide chain release factors, and hemK knockout induces defects in translational termination.</title>
        <authorList>
            <person name="Nakahigashi K."/>
            <person name="Kubo N."/>
            <person name="Narita S."/>
            <person name="Shimaoka T."/>
            <person name="Goto S."/>
            <person name="Oshima T."/>
            <person name="Mori H."/>
            <person name="Maeda M."/>
            <person name="Wada C."/>
            <person name="Inokuchi H."/>
        </authorList>
    </citation>
    <scope>METHYLATION BY PRMC</scope>
    <source>
        <strain>K12</strain>
    </source>
</reference>
<reference key="14">
    <citation type="journal article" date="2007" name="J. Biol. Chem.">
        <title>Methylation of bacterial release factors RF1 and RF2 is required for normal translation termination in vivo.</title>
        <authorList>
            <person name="Mora L."/>
            <person name="Heurgue-Hamard V."/>
            <person name="de Zamaroczy M."/>
            <person name="Kervestin S."/>
            <person name="Buckingham R.H."/>
        </authorList>
    </citation>
    <scope>PTM</scope>
    <scope>EFFECT OF METHYLATION</scope>
    <source>
        <strain>K12</strain>
    </source>
</reference>
<reference key="15">
    <citation type="journal article" date="2005" name="Mol. Cell">
        <title>Molecular basis for bacterial class I release factor methylation by PrmC.</title>
        <authorList>
            <person name="Graille M."/>
            <person name="Heurgue-Hamard V."/>
            <person name="Champ S."/>
            <person name="Mora L."/>
            <person name="Scrima N."/>
            <person name="Ulryck N."/>
            <person name="van Tilbeurgh H."/>
            <person name="Buckingham R.H."/>
        </authorList>
    </citation>
    <scope>X-RAY CRYSTALLOGRAPHY (3.1 ANGSTROMS) IN COMPLEX WITH METHYLTRANSFERASE PRMC</scope>
</reference>
<proteinExistence type="evidence at protein level"/>
<accession>P0A7I0</accession>
<accession>P07011</accession>
<accession>P77340</accession>